<organism>
    <name type="scientific">Latilactobacillus sakei subsp. sakei (strain 23K)</name>
    <name type="common">Lactobacillus sakei subsp. sakei</name>
    <dbReference type="NCBI Taxonomy" id="314315"/>
    <lineage>
        <taxon>Bacteria</taxon>
        <taxon>Bacillati</taxon>
        <taxon>Bacillota</taxon>
        <taxon>Bacilli</taxon>
        <taxon>Lactobacillales</taxon>
        <taxon>Lactobacillaceae</taxon>
        <taxon>Latilactobacillus</taxon>
    </lineage>
</organism>
<evidence type="ECO:0000255" key="1">
    <source>
        <dbReference type="HAMAP-Rule" id="MF_00514"/>
    </source>
</evidence>
<evidence type="ECO:0000256" key="2">
    <source>
        <dbReference type="SAM" id="MobiDB-lite"/>
    </source>
</evidence>
<evidence type="ECO:0000305" key="3"/>
<reference key="1">
    <citation type="journal article" date="2005" name="Nat. Biotechnol.">
        <title>The complete genome sequence of the meat-borne lactic acid bacterium Lactobacillus sakei 23K.</title>
        <authorList>
            <person name="Chaillou S."/>
            <person name="Champomier-Verges M.-C."/>
            <person name="Cornet M."/>
            <person name="Crutz-Le Coq A.-M."/>
            <person name="Dudez A.-M."/>
            <person name="Martin V."/>
            <person name="Beaufils S."/>
            <person name="Darbon-Rongere E."/>
            <person name="Bossy R."/>
            <person name="Loux V."/>
            <person name="Zagorec M."/>
        </authorList>
    </citation>
    <scope>NUCLEOTIDE SEQUENCE [LARGE SCALE GENOMIC DNA]</scope>
    <source>
        <strain>23K</strain>
    </source>
</reference>
<comment type="similarity">
    <text evidence="1">Belongs to the bacterial ribosomal protein bL35 family.</text>
</comment>
<proteinExistence type="inferred from homology"/>
<accession>Q38VT3</accession>
<name>RL35_LATSS</name>
<dbReference type="EMBL" id="CR936503">
    <property type="protein sequence ID" value="CAI55700.1"/>
    <property type="molecule type" value="Genomic_DNA"/>
</dbReference>
<dbReference type="RefSeq" id="WP_004265303.1">
    <property type="nucleotide sequence ID" value="NC_007576.1"/>
</dbReference>
<dbReference type="SMR" id="Q38VT3"/>
<dbReference type="STRING" id="314315.LCA_1397"/>
<dbReference type="GeneID" id="57132309"/>
<dbReference type="KEGG" id="lsa:LCA_1397"/>
<dbReference type="eggNOG" id="COG0291">
    <property type="taxonomic scope" value="Bacteria"/>
</dbReference>
<dbReference type="HOGENOM" id="CLU_169643_3_1_9"/>
<dbReference type="OrthoDB" id="47476at2"/>
<dbReference type="Proteomes" id="UP000002707">
    <property type="component" value="Chromosome"/>
</dbReference>
<dbReference type="GO" id="GO:0022625">
    <property type="term" value="C:cytosolic large ribosomal subunit"/>
    <property type="evidence" value="ECO:0007669"/>
    <property type="project" value="TreeGrafter"/>
</dbReference>
<dbReference type="GO" id="GO:0003735">
    <property type="term" value="F:structural constituent of ribosome"/>
    <property type="evidence" value="ECO:0007669"/>
    <property type="project" value="InterPro"/>
</dbReference>
<dbReference type="GO" id="GO:0006412">
    <property type="term" value="P:translation"/>
    <property type="evidence" value="ECO:0007669"/>
    <property type="project" value="UniProtKB-UniRule"/>
</dbReference>
<dbReference type="FunFam" id="4.10.410.60:FF:000001">
    <property type="entry name" value="50S ribosomal protein L35"/>
    <property type="match status" value="1"/>
</dbReference>
<dbReference type="Gene3D" id="4.10.410.60">
    <property type="match status" value="1"/>
</dbReference>
<dbReference type="HAMAP" id="MF_00514">
    <property type="entry name" value="Ribosomal_bL35"/>
    <property type="match status" value="1"/>
</dbReference>
<dbReference type="InterPro" id="IPR001706">
    <property type="entry name" value="Ribosomal_bL35"/>
</dbReference>
<dbReference type="InterPro" id="IPR021137">
    <property type="entry name" value="Ribosomal_bL35-like"/>
</dbReference>
<dbReference type="InterPro" id="IPR018265">
    <property type="entry name" value="Ribosomal_bL35_CS"/>
</dbReference>
<dbReference type="InterPro" id="IPR037229">
    <property type="entry name" value="Ribosomal_bL35_sf"/>
</dbReference>
<dbReference type="NCBIfam" id="TIGR00001">
    <property type="entry name" value="rpmI_bact"/>
    <property type="match status" value="1"/>
</dbReference>
<dbReference type="PANTHER" id="PTHR33343">
    <property type="entry name" value="54S RIBOSOMAL PROTEIN BL35M"/>
    <property type="match status" value="1"/>
</dbReference>
<dbReference type="PANTHER" id="PTHR33343:SF1">
    <property type="entry name" value="LARGE RIBOSOMAL SUBUNIT PROTEIN BL35M"/>
    <property type="match status" value="1"/>
</dbReference>
<dbReference type="Pfam" id="PF01632">
    <property type="entry name" value="Ribosomal_L35p"/>
    <property type="match status" value="1"/>
</dbReference>
<dbReference type="PRINTS" id="PR00064">
    <property type="entry name" value="RIBOSOMALL35"/>
</dbReference>
<dbReference type="SUPFAM" id="SSF143034">
    <property type="entry name" value="L35p-like"/>
    <property type="match status" value="1"/>
</dbReference>
<dbReference type="PROSITE" id="PS00936">
    <property type="entry name" value="RIBOSOMAL_L35"/>
    <property type="match status" value="1"/>
</dbReference>
<gene>
    <name evidence="1" type="primary">rpmI</name>
    <name type="ordered locus">LCA_1397</name>
</gene>
<sequence length="66" mass="7755">MPKFKTHRASAKRFKRTGNGGLKRSHAYTSHRFHGKTKKQRRQLRKSGMVSNSDMRRIRQMLSGLK</sequence>
<protein>
    <recommendedName>
        <fullName evidence="1">Large ribosomal subunit protein bL35</fullName>
    </recommendedName>
    <alternativeName>
        <fullName evidence="3">50S ribosomal protein L35</fullName>
    </alternativeName>
</protein>
<keyword id="KW-1185">Reference proteome</keyword>
<keyword id="KW-0687">Ribonucleoprotein</keyword>
<keyword id="KW-0689">Ribosomal protein</keyword>
<feature type="chain" id="PRO_0000258693" description="Large ribosomal subunit protein bL35">
    <location>
        <begin position="1"/>
        <end position="66"/>
    </location>
</feature>
<feature type="region of interest" description="Disordered" evidence="2">
    <location>
        <begin position="1"/>
        <end position="66"/>
    </location>
</feature>
<feature type="compositionally biased region" description="Basic residues" evidence="2">
    <location>
        <begin position="1"/>
        <end position="16"/>
    </location>
</feature>
<feature type="compositionally biased region" description="Basic residues" evidence="2">
    <location>
        <begin position="23"/>
        <end position="45"/>
    </location>
</feature>